<evidence type="ECO:0000255" key="1">
    <source>
        <dbReference type="HAMAP-Rule" id="MF_00373"/>
    </source>
</evidence>
<evidence type="ECO:0000305" key="2"/>
<gene>
    <name evidence="1" type="primary">rpmB</name>
    <name type="ordered locus">XfasM23_0481</name>
</gene>
<organism>
    <name type="scientific">Xylella fastidiosa (strain M23)</name>
    <dbReference type="NCBI Taxonomy" id="405441"/>
    <lineage>
        <taxon>Bacteria</taxon>
        <taxon>Pseudomonadati</taxon>
        <taxon>Pseudomonadota</taxon>
        <taxon>Gammaproteobacteria</taxon>
        <taxon>Lysobacterales</taxon>
        <taxon>Lysobacteraceae</taxon>
        <taxon>Xylella</taxon>
    </lineage>
</organism>
<name>RL28_XYLF2</name>
<reference key="1">
    <citation type="journal article" date="2010" name="J. Bacteriol.">
        <title>Whole genome sequences of two Xylella fastidiosa strains (M12 and M23) causing almond leaf scorch disease in California.</title>
        <authorList>
            <person name="Chen J."/>
            <person name="Xie G."/>
            <person name="Han S."/>
            <person name="Chertkov O."/>
            <person name="Sims D."/>
            <person name="Civerolo E.L."/>
        </authorList>
    </citation>
    <scope>NUCLEOTIDE SEQUENCE [LARGE SCALE GENOMIC DNA]</scope>
    <source>
        <strain>M23</strain>
    </source>
</reference>
<accession>B2I8L7</accession>
<feature type="chain" id="PRO_1000121711" description="Large ribosomal subunit protein bL28">
    <location>
        <begin position="1"/>
        <end position="78"/>
    </location>
</feature>
<sequence>MSRVCQVTGKRVQTGNNVSHANNKTRRRFLPNLHKRRFWVASENRWVKLRVSTCAVRTIDKNGIDAVLAELRASGEKV</sequence>
<comment type="similarity">
    <text evidence="1">Belongs to the bacterial ribosomal protein bL28 family.</text>
</comment>
<keyword id="KW-0687">Ribonucleoprotein</keyword>
<keyword id="KW-0689">Ribosomal protein</keyword>
<proteinExistence type="inferred from homology"/>
<dbReference type="EMBL" id="CP001011">
    <property type="protein sequence ID" value="ACB91928.1"/>
    <property type="molecule type" value="Genomic_DNA"/>
</dbReference>
<dbReference type="RefSeq" id="WP_004086565.1">
    <property type="nucleotide sequence ID" value="NC_010577.1"/>
</dbReference>
<dbReference type="SMR" id="B2I8L7"/>
<dbReference type="GeneID" id="93904190"/>
<dbReference type="KEGG" id="xfn:XfasM23_0481"/>
<dbReference type="HOGENOM" id="CLU_064548_3_1_6"/>
<dbReference type="Proteomes" id="UP000001698">
    <property type="component" value="Chromosome"/>
</dbReference>
<dbReference type="GO" id="GO:0022625">
    <property type="term" value="C:cytosolic large ribosomal subunit"/>
    <property type="evidence" value="ECO:0007669"/>
    <property type="project" value="TreeGrafter"/>
</dbReference>
<dbReference type="GO" id="GO:0003735">
    <property type="term" value="F:structural constituent of ribosome"/>
    <property type="evidence" value="ECO:0007669"/>
    <property type="project" value="InterPro"/>
</dbReference>
<dbReference type="GO" id="GO:0006412">
    <property type="term" value="P:translation"/>
    <property type="evidence" value="ECO:0007669"/>
    <property type="project" value="UniProtKB-UniRule"/>
</dbReference>
<dbReference type="FunFam" id="2.30.170.40:FF:000001">
    <property type="entry name" value="50S ribosomal protein L28"/>
    <property type="match status" value="1"/>
</dbReference>
<dbReference type="Gene3D" id="2.30.170.40">
    <property type="entry name" value="Ribosomal protein L28/L24"/>
    <property type="match status" value="1"/>
</dbReference>
<dbReference type="HAMAP" id="MF_00373">
    <property type="entry name" value="Ribosomal_bL28"/>
    <property type="match status" value="1"/>
</dbReference>
<dbReference type="InterPro" id="IPR026569">
    <property type="entry name" value="Ribosomal_bL28"/>
</dbReference>
<dbReference type="InterPro" id="IPR034704">
    <property type="entry name" value="Ribosomal_bL28/bL31-like_sf"/>
</dbReference>
<dbReference type="InterPro" id="IPR001383">
    <property type="entry name" value="Ribosomal_bL28_bact-type"/>
</dbReference>
<dbReference type="InterPro" id="IPR037147">
    <property type="entry name" value="Ribosomal_bL28_sf"/>
</dbReference>
<dbReference type="NCBIfam" id="TIGR00009">
    <property type="entry name" value="L28"/>
    <property type="match status" value="1"/>
</dbReference>
<dbReference type="PANTHER" id="PTHR13528">
    <property type="entry name" value="39S RIBOSOMAL PROTEIN L28, MITOCHONDRIAL"/>
    <property type="match status" value="1"/>
</dbReference>
<dbReference type="PANTHER" id="PTHR13528:SF2">
    <property type="entry name" value="LARGE RIBOSOMAL SUBUNIT PROTEIN BL28M"/>
    <property type="match status" value="1"/>
</dbReference>
<dbReference type="Pfam" id="PF00830">
    <property type="entry name" value="Ribosomal_L28"/>
    <property type="match status" value="1"/>
</dbReference>
<dbReference type="SUPFAM" id="SSF143800">
    <property type="entry name" value="L28p-like"/>
    <property type="match status" value="1"/>
</dbReference>
<protein>
    <recommendedName>
        <fullName evidence="1">Large ribosomal subunit protein bL28</fullName>
    </recommendedName>
    <alternativeName>
        <fullName evidence="2">50S ribosomal protein L28</fullName>
    </alternativeName>
</protein>